<feature type="chain" id="PRO_0000065314" description="Pseudocleavage protein nop-1">
    <location>
        <begin position="1"/>
        <end position="759"/>
    </location>
</feature>
<feature type="region of interest" description="Disordered" evidence="1">
    <location>
        <begin position="1"/>
        <end position="46"/>
    </location>
</feature>
<feature type="region of interest" description="Disordered" evidence="1">
    <location>
        <begin position="334"/>
        <end position="361"/>
    </location>
</feature>
<feature type="region of interest" description="Disordered" evidence="1">
    <location>
        <begin position="379"/>
        <end position="413"/>
    </location>
</feature>
<feature type="region of interest" description="Disordered" evidence="1">
    <location>
        <begin position="440"/>
        <end position="495"/>
    </location>
</feature>
<feature type="region of interest" description="Disordered" evidence="1">
    <location>
        <begin position="732"/>
        <end position="759"/>
    </location>
</feature>
<feature type="compositionally biased region" description="Basic and acidic residues" evidence="1">
    <location>
        <begin position="10"/>
        <end position="42"/>
    </location>
</feature>
<feature type="compositionally biased region" description="Low complexity" evidence="1">
    <location>
        <begin position="448"/>
        <end position="465"/>
    </location>
</feature>
<feature type="compositionally biased region" description="Polar residues" evidence="1">
    <location>
        <begin position="473"/>
        <end position="482"/>
    </location>
</feature>
<feature type="compositionally biased region" description="Basic and acidic residues" evidence="1">
    <location>
        <begin position="485"/>
        <end position="495"/>
    </location>
</feature>
<feature type="compositionally biased region" description="Polar residues" evidence="1">
    <location>
        <begin position="736"/>
        <end position="759"/>
    </location>
</feature>
<feature type="splice variant" id="VSP_053849" description="In isoform a." evidence="5">
    <location>
        <begin position="324"/>
        <end position="325"/>
    </location>
</feature>
<proteinExistence type="evidence at transcript level"/>
<evidence type="ECO:0000256" key="1">
    <source>
        <dbReference type="SAM" id="MobiDB-lite"/>
    </source>
</evidence>
<evidence type="ECO:0000269" key="2">
    <source>
    </source>
</evidence>
<evidence type="ECO:0000269" key="3">
    <source>
    </source>
</evidence>
<evidence type="ECO:0000269" key="4">
    <source>
    </source>
</evidence>
<evidence type="ECO:0000305" key="5"/>
<name>NOP1_CAEEL</name>
<gene>
    <name type="primary">nop-1</name>
    <name type="ORF">F25B5.2</name>
</gene>
<protein>
    <recommendedName>
        <fullName>Pseudocleavage protein nop-1</fullName>
    </recommendedName>
</protein>
<comment type="function">
    <text evidence="2 3 4">Required for formation of the pseudocleavage furrow during the first cleavage of the embryo and also mediates aster-induced furrowing during cytokinesis. Promotes cortical recruitment of ani-1 and nmy-2 during pseudocleavage and cytokinesis and promotes the accumulation of actin at furrowing regions. Regulates establishment of embryonic cell polarity.</text>
</comment>
<comment type="subcellular location">
    <subcellularLocation>
        <location evidence="3">Nucleus</location>
    </subcellularLocation>
    <subcellularLocation>
        <location evidence="3">Cytoplasm</location>
    </subcellularLocation>
    <subcellularLocation>
        <location evidence="3">Cytoplasm</location>
        <location evidence="3">Cell cortex</location>
    </subcellularLocation>
    <subcellularLocation>
        <location evidence="3">Cleavage furrow</location>
    </subcellularLocation>
    <text>Highly concentrated in interphase nuclei. As well as a significant cytoplasmic pool, a distinct cortical localization is also detected, particularly at ingressing pseudocleavage and cleavage furrows.</text>
</comment>
<comment type="alternative products">
    <event type="alternative splicing"/>
    <isoform>
        <id>Q09314-1</id>
        <name>b</name>
        <sequence type="displayed"/>
    </isoform>
    <isoform>
        <id>Q09314-2</id>
        <name>a</name>
        <sequence type="described" ref="VSP_053849"/>
    </isoform>
</comment>
<comment type="disruption phenotype">
    <text evidence="2 3 4">Mutant embryos do not display the anterior cortical contractions associated with pseudocleavage and do not form a pseudocleavage furrow. Cortical actin foci remain uniformly distributed rather than the asymmetric distribution seen in wild-type embryos. Approximately 20% of mutant embryos fail to hatch. Those that do hatch are viable and fertile and display normal P granule localization. Increased embryonic lethality in par-1, par-2 and par-3 mutants.</text>
</comment>
<reference key="1">
    <citation type="journal article" date="2012" name="Genetics">
        <title>A genome-wide RNAi screen for enhancers of par mutants reveals new contributors to early embryonic polarity in Caenorhabditis elegans.</title>
        <authorList>
            <person name="Morton D.G."/>
            <person name="Hoose W.A."/>
            <person name="Kemphues K.J."/>
        </authorList>
    </citation>
    <scope>NUCLEOTIDE SEQUENCE [MRNA] (ISOFORM B)</scope>
    <scope>FUNCTION</scope>
    <scope>DISRUPTION PHENOTYPE</scope>
</reference>
<reference key="2">
    <citation type="journal article" date="1998" name="Science">
        <title>Genome sequence of the nematode C. elegans: a platform for investigating biology.</title>
        <authorList>
            <consortium name="The C. elegans sequencing consortium"/>
        </authorList>
    </citation>
    <scope>NUCLEOTIDE SEQUENCE [LARGE SCALE GENOMIC DNA]</scope>
    <scope>ALTERNATIVE SPLICING</scope>
    <source>
        <strain>Bristol N2</strain>
    </source>
</reference>
<reference key="3">
    <citation type="journal article" date="1995" name="Dev. Biol.">
        <title>Pseudocleavage is dispensable for polarity and development in C. elegans embryos.</title>
        <authorList>
            <person name="Rose L.S."/>
            <person name="Lamb M.L."/>
            <person name="Hird S.N."/>
            <person name="Kemphues K.J."/>
        </authorList>
    </citation>
    <scope>FUNCTION</scope>
    <scope>DISRUPTION PHENOTYPE</scope>
    <source>
        <strain>Bristol N2</strain>
    </source>
</reference>
<reference key="4">
    <citation type="journal article" date="2012" name="Mol. Biol. Cell">
        <title>RhoA activation during polarization and cytokinesis of the early Caenorhabditis elegans embryo is differentially dependent on NOP-1 and CYK-4.</title>
        <authorList>
            <person name="Tse Y.C."/>
            <person name="Werner M."/>
            <person name="Longhini K.M."/>
            <person name="Labbe J.C."/>
            <person name="Goldstein B."/>
            <person name="Glotzer M."/>
        </authorList>
    </citation>
    <scope>FUNCTION</scope>
    <scope>SUBCELLULAR LOCATION</scope>
    <scope>DISRUPTION PHENOTYPE</scope>
</reference>
<accession>Q09314</accession>
<accession>J7H8Z6</accession>
<accession>W6RY41</accession>
<dbReference type="EMBL" id="JX293831">
    <property type="protein sequence ID" value="AFP94023.1"/>
    <property type="molecule type" value="mRNA"/>
</dbReference>
<dbReference type="EMBL" id="FO081045">
    <property type="protein sequence ID" value="CCD68773.1"/>
    <property type="molecule type" value="Genomic_DNA"/>
</dbReference>
<dbReference type="EMBL" id="FO081045">
    <property type="protein sequence ID" value="CDM63515.1"/>
    <property type="molecule type" value="Genomic_DNA"/>
</dbReference>
<dbReference type="PIR" id="T16149">
    <property type="entry name" value="T16149"/>
</dbReference>
<dbReference type="RefSeq" id="NP_001293631.1">
    <molecule id="Q09314-1"/>
    <property type="nucleotide sequence ID" value="NM_001306702.2"/>
</dbReference>
<dbReference type="RefSeq" id="NP_498298.1">
    <molecule id="Q09314-2"/>
    <property type="nucleotide sequence ID" value="NM_065897.7"/>
</dbReference>
<dbReference type="BioGRID" id="41066">
    <property type="interactions" value="4"/>
</dbReference>
<dbReference type="FunCoup" id="Q09314">
    <property type="interactions" value="1558"/>
</dbReference>
<dbReference type="IntAct" id="Q09314">
    <property type="interactions" value="1"/>
</dbReference>
<dbReference type="STRING" id="6239.F25B5.2b.1"/>
<dbReference type="PaxDb" id="6239-F25B5.2.1"/>
<dbReference type="PeptideAtlas" id="Q09314"/>
<dbReference type="EnsemblMetazoa" id="F25B5.2a.1">
    <molecule id="Q09314-2"/>
    <property type="protein sequence ID" value="F25B5.2a.1"/>
    <property type="gene ID" value="WBGene00017774"/>
</dbReference>
<dbReference type="EnsemblMetazoa" id="F25B5.2a.2">
    <molecule id="Q09314-2"/>
    <property type="protein sequence ID" value="F25B5.2a.2"/>
    <property type="gene ID" value="WBGene00017774"/>
</dbReference>
<dbReference type="EnsemblMetazoa" id="F25B5.2b.1">
    <molecule id="Q09314-1"/>
    <property type="protein sequence ID" value="F25B5.2b.1"/>
    <property type="gene ID" value="WBGene00017774"/>
</dbReference>
<dbReference type="EnsemblMetazoa" id="F25B5.2b.2">
    <molecule id="Q09314-1"/>
    <property type="protein sequence ID" value="F25B5.2b.2"/>
    <property type="gene ID" value="WBGene00017774"/>
</dbReference>
<dbReference type="GeneID" id="175845"/>
<dbReference type="KEGG" id="cel:CELE_F25B5.2"/>
<dbReference type="UCSC" id="F25B5.2.1">
    <molecule id="Q09314-1"/>
    <property type="organism name" value="c. elegans"/>
</dbReference>
<dbReference type="AGR" id="WB:WBGene00017774"/>
<dbReference type="CTD" id="175845"/>
<dbReference type="WormBase" id="F25B5.2a">
    <molecule id="Q09314-2"/>
    <property type="protein sequence ID" value="CE01919"/>
    <property type="gene ID" value="WBGene00017774"/>
    <property type="gene designation" value="nop-1"/>
</dbReference>
<dbReference type="WormBase" id="F25B5.2b">
    <molecule id="Q09314-1"/>
    <property type="protein sequence ID" value="CE49498"/>
    <property type="gene ID" value="WBGene00017774"/>
    <property type="gene designation" value="nop-1"/>
</dbReference>
<dbReference type="eggNOG" id="ENOG502TGSX">
    <property type="taxonomic scope" value="Eukaryota"/>
</dbReference>
<dbReference type="InParanoid" id="Q09314"/>
<dbReference type="OMA" id="STMLIYP"/>
<dbReference type="OrthoDB" id="5861630at2759"/>
<dbReference type="PRO" id="PR:Q09314"/>
<dbReference type="Proteomes" id="UP000001940">
    <property type="component" value="Chromosome III"/>
</dbReference>
<dbReference type="Bgee" id="WBGene00017774">
    <property type="expression patterns" value="Expressed in adult organism and 4 other cell types or tissues"/>
</dbReference>
<dbReference type="GO" id="GO:0005938">
    <property type="term" value="C:cell cortex"/>
    <property type="evidence" value="ECO:0000314"/>
    <property type="project" value="WormBase"/>
</dbReference>
<dbReference type="GO" id="GO:0032154">
    <property type="term" value="C:cleavage furrow"/>
    <property type="evidence" value="ECO:0000314"/>
    <property type="project" value="WormBase"/>
</dbReference>
<dbReference type="GO" id="GO:0005737">
    <property type="term" value="C:cytoplasm"/>
    <property type="evidence" value="ECO:0000314"/>
    <property type="project" value="WormBase"/>
</dbReference>
<dbReference type="GO" id="GO:0005634">
    <property type="term" value="C:nucleus"/>
    <property type="evidence" value="ECO:0000314"/>
    <property type="project" value="WormBase"/>
</dbReference>
<dbReference type="GO" id="GO:0008595">
    <property type="term" value="P:anterior/posterior axis specification, embryo"/>
    <property type="evidence" value="ECO:0000315"/>
    <property type="project" value="WormBase"/>
</dbReference>
<dbReference type="GO" id="GO:0000281">
    <property type="term" value="P:mitotic cytokinesis"/>
    <property type="evidence" value="ECO:0000316"/>
    <property type="project" value="WormBase"/>
</dbReference>
<organism>
    <name type="scientific">Caenorhabditis elegans</name>
    <dbReference type="NCBI Taxonomy" id="6239"/>
    <lineage>
        <taxon>Eukaryota</taxon>
        <taxon>Metazoa</taxon>
        <taxon>Ecdysozoa</taxon>
        <taxon>Nematoda</taxon>
        <taxon>Chromadorea</taxon>
        <taxon>Rhabditida</taxon>
        <taxon>Rhabditina</taxon>
        <taxon>Rhabditomorpha</taxon>
        <taxon>Rhabditoidea</taxon>
        <taxon>Rhabditidae</taxon>
        <taxon>Peloderinae</taxon>
        <taxon>Caenorhabditis</taxon>
    </lineage>
</organism>
<keyword id="KW-0025">Alternative splicing</keyword>
<keyword id="KW-0131">Cell cycle</keyword>
<keyword id="KW-0132">Cell division</keyword>
<keyword id="KW-0963">Cytoplasm</keyword>
<keyword id="KW-0217">Developmental protein</keyword>
<keyword id="KW-0539">Nucleus</keyword>
<keyword id="KW-1185">Reference proteome</keyword>
<sequence length="759" mass="83663">MSAPKKRKSDIHSDDRDHADHQTKKEKHWFEEKSEQNGENRRSSIFKGFLKKVKSSTTLKSTNKSASSSKMDTIANETHLSITSESSITSVESCHSAQFPNVAKNAMLRTLVNRDSFTPVPPPDGESVTFILPEIGSSKLEFTSKMDDAISIESRMSIGSCHTIDEDSASIGSTSVFCTPSRNPLMRNGLRMSTRSVPENQDDMPPALFRSLCNSAVRRVPTSKSEGGGTPMRRSMRMSIQKRNLSSKNMEDVPEEEALTVSNSSIRVDAPIAEEDEEVFGAAKEYFDNNVTSHNDSADEGTCSMSRLSTTSERASGVGGSSIFQGRRSSIFRKIFPGKSESKDRRMSDNNQASEQYMDKKSRRASVVSFNEFTSVSGLSVNDSASKNPKDLTESPQQPKLRKKTASSSNLSQRISSVFRMGSNSTVKLNEYVPSPIVSQSSRRNTLTGNSSISSGVGSIASGTSDQGYGTIGSRSGQSISRCGSRRDDEGKKERTRRLLDRIIISDVPAGELLKLKIEQVKKQKQLEMDELFETQLTESSSSDTSQSENLQFDVVAVDIKADGSPFSTTAATFMDSELSKRVKEEIVSNYRPDRCGSITEYEPELVFVMPEQPQASLKSLNDSVSSNADINLDHLRNVRSGLCKSIEEWKRITKMRESSTMLIYPMFCQSEEEWDSKGTIDAIFLMLDGILMNTKRWMPNGKCILAGVTPNNVILLRNKFDELKLSVAISESDGPASSNDDFDTQSTASTSTVFGAKI</sequence>